<protein>
    <recommendedName>
        <fullName evidence="1">Orotidine 5'-phosphate decarboxylase</fullName>
        <ecNumber evidence="1">4.1.1.23</ecNumber>
    </recommendedName>
    <alternativeName>
        <fullName evidence="1">OMP decarboxylase</fullName>
        <shortName evidence="1">OMPDCase</shortName>
        <shortName evidence="1">OMPdecase</shortName>
    </alternativeName>
</protein>
<dbReference type="EC" id="4.1.1.23" evidence="1"/>
<dbReference type="EMBL" id="CP000410">
    <property type="protein sequence ID" value="ABJ54645.1"/>
    <property type="molecule type" value="Genomic_DNA"/>
</dbReference>
<dbReference type="RefSeq" id="WP_001206713.1">
    <property type="nucleotide sequence ID" value="NZ_JAMLJR010000001.1"/>
</dbReference>
<dbReference type="SMR" id="Q04LJ3"/>
<dbReference type="PaxDb" id="373153-SPD_0608"/>
<dbReference type="KEGG" id="spd:SPD_0608"/>
<dbReference type="eggNOG" id="COG0284">
    <property type="taxonomic scope" value="Bacteria"/>
</dbReference>
<dbReference type="HOGENOM" id="CLU_067069_1_1_9"/>
<dbReference type="BioCyc" id="SPNE373153:G1G6V-671-MONOMER"/>
<dbReference type="UniPathway" id="UPA00070">
    <property type="reaction ID" value="UER00120"/>
</dbReference>
<dbReference type="Proteomes" id="UP000001452">
    <property type="component" value="Chromosome"/>
</dbReference>
<dbReference type="GO" id="GO:0005829">
    <property type="term" value="C:cytosol"/>
    <property type="evidence" value="ECO:0007669"/>
    <property type="project" value="TreeGrafter"/>
</dbReference>
<dbReference type="GO" id="GO:0004590">
    <property type="term" value="F:orotidine-5'-phosphate decarboxylase activity"/>
    <property type="evidence" value="ECO:0007669"/>
    <property type="project" value="UniProtKB-UniRule"/>
</dbReference>
<dbReference type="GO" id="GO:0006207">
    <property type="term" value="P:'de novo' pyrimidine nucleobase biosynthetic process"/>
    <property type="evidence" value="ECO:0007669"/>
    <property type="project" value="InterPro"/>
</dbReference>
<dbReference type="GO" id="GO:0044205">
    <property type="term" value="P:'de novo' UMP biosynthetic process"/>
    <property type="evidence" value="ECO:0007669"/>
    <property type="project" value="UniProtKB-UniRule"/>
</dbReference>
<dbReference type="CDD" id="cd04725">
    <property type="entry name" value="OMP_decarboxylase_like"/>
    <property type="match status" value="1"/>
</dbReference>
<dbReference type="FunFam" id="3.20.20.70:FF:000015">
    <property type="entry name" value="Orotidine 5'-phosphate decarboxylase"/>
    <property type="match status" value="1"/>
</dbReference>
<dbReference type="Gene3D" id="3.20.20.70">
    <property type="entry name" value="Aldolase class I"/>
    <property type="match status" value="1"/>
</dbReference>
<dbReference type="HAMAP" id="MF_01200_B">
    <property type="entry name" value="OMPdecase_type1_B"/>
    <property type="match status" value="1"/>
</dbReference>
<dbReference type="InterPro" id="IPR013785">
    <property type="entry name" value="Aldolase_TIM"/>
</dbReference>
<dbReference type="InterPro" id="IPR014732">
    <property type="entry name" value="OMPdecase"/>
</dbReference>
<dbReference type="InterPro" id="IPR018089">
    <property type="entry name" value="OMPdecase_AS"/>
</dbReference>
<dbReference type="InterPro" id="IPR047596">
    <property type="entry name" value="OMPdecase_bac"/>
</dbReference>
<dbReference type="InterPro" id="IPR001754">
    <property type="entry name" value="OMPdeCOase_dom"/>
</dbReference>
<dbReference type="InterPro" id="IPR011060">
    <property type="entry name" value="RibuloseP-bd_barrel"/>
</dbReference>
<dbReference type="NCBIfam" id="NF001273">
    <property type="entry name" value="PRK00230.1"/>
    <property type="match status" value="1"/>
</dbReference>
<dbReference type="NCBIfam" id="TIGR01740">
    <property type="entry name" value="pyrF"/>
    <property type="match status" value="1"/>
</dbReference>
<dbReference type="PANTHER" id="PTHR32119">
    <property type="entry name" value="OROTIDINE 5'-PHOSPHATE DECARBOXYLASE"/>
    <property type="match status" value="1"/>
</dbReference>
<dbReference type="PANTHER" id="PTHR32119:SF2">
    <property type="entry name" value="OROTIDINE 5'-PHOSPHATE DECARBOXYLASE"/>
    <property type="match status" value="1"/>
</dbReference>
<dbReference type="Pfam" id="PF00215">
    <property type="entry name" value="OMPdecase"/>
    <property type="match status" value="1"/>
</dbReference>
<dbReference type="SMART" id="SM00934">
    <property type="entry name" value="OMPdecase"/>
    <property type="match status" value="1"/>
</dbReference>
<dbReference type="SUPFAM" id="SSF51366">
    <property type="entry name" value="Ribulose-phoshate binding barrel"/>
    <property type="match status" value="1"/>
</dbReference>
<dbReference type="PROSITE" id="PS00156">
    <property type="entry name" value="OMPDECASE"/>
    <property type="match status" value="1"/>
</dbReference>
<proteinExistence type="inferred from homology"/>
<reference key="1">
    <citation type="journal article" date="2007" name="J. Bacteriol.">
        <title>Genome sequence of Avery's virulent serotype 2 strain D39 of Streptococcus pneumoniae and comparison with that of unencapsulated laboratory strain R6.</title>
        <authorList>
            <person name="Lanie J.A."/>
            <person name="Ng W.-L."/>
            <person name="Kazmierczak K.M."/>
            <person name="Andrzejewski T.M."/>
            <person name="Davidsen T.M."/>
            <person name="Wayne K.J."/>
            <person name="Tettelin H."/>
            <person name="Glass J.I."/>
            <person name="Winkler M.E."/>
        </authorList>
    </citation>
    <scope>NUCLEOTIDE SEQUENCE [LARGE SCALE GENOMIC DNA]</scope>
    <source>
        <strain>D39 / NCTC 7466</strain>
    </source>
</reference>
<keyword id="KW-0210">Decarboxylase</keyword>
<keyword id="KW-0456">Lyase</keyword>
<keyword id="KW-0665">Pyrimidine biosynthesis</keyword>
<keyword id="KW-1185">Reference proteome</keyword>
<accession>Q04LJ3</accession>
<sequence>MREHRPIIALDFPSFEAVKEFLALFPAEESLYLKVGMELYYAAGPEIVSYLKGLGHSVFLDLKLHDIPNTVKSAMKILSQLGVDMTNVHAAGGVEMMKAAREGLGSQAKLIAVTQLTSTSEAQMQEFQNIQTSLQESVIHYAKKTAEAGLDGVVCSAQEVQVIKQATNPDFICLTPGIRPAGVAVGDQKRVMTPADAYQIGSDYIVVGRPITQAEEPVAAYHAIKDEWTQDWN</sequence>
<name>PYRF_STRP2</name>
<organism>
    <name type="scientific">Streptococcus pneumoniae serotype 2 (strain D39 / NCTC 7466)</name>
    <dbReference type="NCBI Taxonomy" id="373153"/>
    <lineage>
        <taxon>Bacteria</taxon>
        <taxon>Bacillati</taxon>
        <taxon>Bacillota</taxon>
        <taxon>Bacilli</taxon>
        <taxon>Lactobacillales</taxon>
        <taxon>Streptococcaceae</taxon>
        <taxon>Streptococcus</taxon>
    </lineage>
</organism>
<gene>
    <name evidence="1" type="primary">pyrF</name>
    <name type="ordered locus">SPD_0608</name>
</gene>
<feature type="chain" id="PRO_1000065945" description="Orotidine 5'-phosphate decarboxylase">
    <location>
        <begin position="1"/>
        <end position="233"/>
    </location>
</feature>
<feature type="active site" description="Proton donor" evidence="1">
    <location>
        <position position="63"/>
    </location>
</feature>
<feature type="binding site" evidence="1">
    <location>
        <position position="11"/>
    </location>
    <ligand>
        <name>substrate</name>
    </ligand>
</feature>
<feature type="binding site" evidence="1">
    <location>
        <position position="34"/>
    </location>
    <ligand>
        <name>substrate</name>
    </ligand>
</feature>
<feature type="binding site" evidence="1">
    <location>
        <begin position="61"/>
        <end position="70"/>
    </location>
    <ligand>
        <name>substrate</name>
    </ligand>
</feature>
<feature type="binding site" evidence="1">
    <location>
        <position position="117"/>
    </location>
    <ligand>
        <name>substrate</name>
    </ligand>
</feature>
<feature type="binding site" evidence="1">
    <location>
        <position position="179"/>
    </location>
    <ligand>
        <name>substrate</name>
    </ligand>
</feature>
<feature type="binding site" evidence="1">
    <location>
        <position position="188"/>
    </location>
    <ligand>
        <name>substrate</name>
    </ligand>
</feature>
<feature type="binding site" evidence="1">
    <location>
        <position position="208"/>
    </location>
    <ligand>
        <name>substrate</name>
    </ligand>
</feature>
<feature type="binding site" evidence="1">
    <location>
        <position position="209"/>
    </location>
    <ligand>
        <name>substrate</name>
    </ligand>
</feature>
<evidence type="ECO:0000255" key="1">
    <source>
        <dbReference type="HAMAP-Rule" id="MF_01200"/>
    </source>
</evidence>
<comment type="function">
    <text evidence="1">Catalyzes the decarboxylation of orotidine 5'-monophosphate (OMP) to uridine 5'-monophosphate (UMP).</text>
</comment>
<comment type="catalytic activity">
    <reaction evidence="1">
        <text>orotidine 5'-phosphate + H(+) = UMP + CO2</text>
        <dbReference type="Rhea" id="RHEA:11596"/>
        <dbReference type="ChEBI" id="CHEBI:15378"/>
        <dbReference type="ChEBI" id="CHEBI:16526"/>
        <dbReference type="ChEBI" id="CHEBI:57538"/>
        <dbReference type="ChEBI" id="CHEBI:57865"/>
        <dbReference type="EC" id="4.1.1.23"/>
    </reaction>
</comment>
<comment type="pathway">
    <text evidence="1">Pyrimidine metabolism; UMP biosynthesis via de novo pathway; UMP from orotate: step 2/2.</text>
</comment>
<comment type="subunit">
    <text evidence="1">Homodimer.</text>
</comment>
<comment type="similarity">
    <text evidence="1">Belongs to the OMP decarboxylase family. Type 1 subfamily.</text>
</comment>